<accession>Q1KVX7</accession>
<name>RR3_TETOB</name>
<organism>
    <name type="scientific">Tetradesmus obliquus</name>
    <name type="common">Green alga</name>
    <name type="synonym">Acutodesmus obliquus</name>
    <dbReference type="NCBI Taxonomy" id="3088"/>
    <lineage>
        <taxon>Eukaryota</taxon>
        <taxon>Viridiplantae</taxon>
        <taxon>Chlorophyta</taxon>
        <taxon>core chlorophytes</taxon>
        <taxon>Chlorophyceae</taxon>
        <taxon>CS clade</taxon>
        <taxon>Sphaeropleales</taxon>
        <taxon>Scenedesmaceae</taxon>
        <taxon>Tetradesmus</taxon>
    </lineage>
</organism>
<reference key="1">
    <citation type="journal article" date="2006" name="BMC Evol. Biol.">
        <title>The complete chloroplast genome sequence of the chlorophycean green alga Scenedesmus obliquus reveals a compact gene organization and a biased distribution of genes on the two DNA strands.</title>
        <authorList>
            <person name="de Cambiaire J.-C."/>
            <person name="Otis C."/>
            <person name="Lemieux C."/>
            <person name="Turmel M."/>
        </authorList>
    </citation>
    <scope>NUCLEOTIDE SEQUENCE [LARGE SCALE GENOMIC DNA]</scope>
    <source>
        <strain>UTEX 393</strain>
    </source>
</reference>
<gene>
    <name type="primary">rps3</name>
</gene>
<sequence>MGQKIHPLGFRVGITKKHQSVWFARFHKHQYAQSVLEDRFLRKNLLKLLPQLFQKKLNNSPNMPKISHIQIVRGLIPYEIGIQIHAQNCHMIKSAFEGLEVQPNFVHNLLKNHLILEKNSVKKTSLFKNAGENIELSLTAESTNDFDSTEKKRGGLNRKGEQSLNFKNSTKKTMKSNVEKRKKLFARFHQRFLGKFIVVKNGKKITKKFDSKKQLSFKNNLLSFFKKNLQERRTFRKNKFQTSFSKSSGFSKNQKNRETISLKQKAFLNFVDSKVSKANLSKPCTKFVNFYMSQTNLSFLNALKAEMNYWNQYFENSKTEEIQKFGSFRYLPLGSQKKWNLLRFKRFEKLPLPLLLKLFKALQQKALKKLERLRKEYLVFGKFSKTKTFSYYQRVRFLQNLKKFISLRKNQNSLNFSQSTFENSAQKTTNQKFALKVASLTEKSFQKKFSKIHEEKNTIKFIDHLQALVQQHRSKNLFLYLATISESRQNLKKIQQFTKQQSDFLFGISPKTLVGLTNEEKQEILKNKVSKTFFKISQKNASQKKNFQDIFVEQLQKQRTICEKNIQLTPKISIQFYSVKAQDFQTRASAVADSIVDDLEKRKAFRGVIKKAKEDLMRTPKVKGVKIQVSGRLNGAEIARSEWVRAGRVPLQTLRANIDYCYKTAQTIYGIIGVKVWIYKGYTKTRKPTANSPSVLLDLL</sequence>
<proteinExistence type="inferred from homology"/>
<keyword id="KW-0150">Chloroplast</keyword>
<keyword id="KW-0934">Plastid</keyword>
<keyword id="KW-0687">Ribonucleoprotein</keyword>
<keyword id="KW-0689">Ribosomal protein</keyword>
<dbReference type="EMBL" id="DQ396875">
    <property type="protein sequence ID" value="ABD48229.1"/>
    <property type="molecule type" value="Genomic_DNA"/>
</dbReference>
<dbReference type="RefSeq" id="YP_635947.1">
    <property type="nucleotide sequence ID" value="NC_008101.1"/>
</dbReference>
<dbReference type="SMR" id="Q1KVX7"/>
<dbReference type="GeneID" id="4099814"/>
<dbReference type="GO" id="GO:0009507">
    <property type="term" value="C:chloroplast"/>
    <property type="evidence" value="ECO:0007669"/>
    <property type="project" value="UniProtKB-SubCell"/>
</dbReference>
<dbReference type="GO" id="GO:0022627">
    <property type="term" value="C:cytosolic small ribosomal subunit"/>
    <property type="evidence" value="ECO:0007669"/>
    <property type="project" value="TreeGrafter"/>
</dbReference>
<dbReference type="GO" id="GO:0003723">
    <property type="term" value="F:RNA binding"/>
    <property type="evidence" value="ECO:0007669"/>
    <property type="project" value="InterPro"/>
</dbReference>
<dbReference type="GO" id="GO:0003735">
    <property type="term" value="F:structural constituent of ribosome"/>
    <property type="evidence" value="ECO:0007669"/>
    <property type="project" value="InterPro"/>
</dbReference>
<dbReference type="GO" id="GO:0006412">
    <property type="term" value="P:translation"/>
    <property type="evidence" value="ECO:0007669"/>
    <property type="project" value="UniProtKB-UniRule"/>
</dbReference>
<dbReference type="CDD" id="cd02412">
    <property type="entry name" value="KH-II_30S_S3"/>
    <property type="match status" value="1"/>
</dbReference>
<dbReference type="Gene3D" id="3.30.1140.32">
    <property type="entry name" value="Ribosomal protein S3, C-terminal domain"/>
    <property type="match status" value="1"/>
</dbReference>
<dbReference type="HAMAP" id="MF_01309_B">
    <property type="entry name" value="Ribosomal_uS3_B"/>
    <property type="match status" value="1"/>
</dbReference>
<dbReference type="InterPro" id="IPR009019">
    <property type="entry name" value="KH_sf_prok-type"/>
</dbReference>
<dbReference type="InterPro" id="IPR036419">
    <property type="entry name" value="Ribosomal_S3_C_sf"/>
</dbReference>
<dbReference type="InterPro" id="IPR005704">
    <property type="entry name" value="Ribosomal_uS3_bac-typ"/>
</dbReference>
<dbReference type="InterPro" id="IPR001351">
    <property type="entry name" value="Ribosomal_uS3_C"/>
</dbReference>
<dbReference type="InterPro" id="IPR018280">
    <property type="entry name" value="Ribosomal_uS3_CS"/>
</dbReference>
<dbReference type="NCBIfam" id="TIGR01009">
    <property type="entry name" value="rpsC_bact"/>
    <property type="match status" value="1"/>
</dbReference>
<dbReference type="PANTHER" id="PTHR11760">
    <property type="entry name" value="30S/40S RIBOSOMAL PROTEIN S3"/>
    <property type="match status" value="1"/>
</dbReference>
<dbReference type="PANTHER" id="PTHR11760:SF19">
    <property type="entry name" value="SMALL RIBOSOMAL SUBUNIT PROTEIN US3C"/>
    <property type="match status" value="1"/>
</dbReference>
<dbReference type="Pfam" id="PF00189">
    <property type="entry name" value="Ribosomal_S3_C"/>
    <property type="match status" value="1"/>
</dbReference>
<dbReference type="SUPFAM" id="SSF54814">
    <property type="entry name" value="Prokaryotic type KH domain (KH-domain type II)"/>
    <property type="match status" value="1"/>
</dbReference>
<dbReference type="SUPFAM" id="SSF54821">
    <property type="entry name" value="Ribosomal protein S3 C-terminal domain"/>
    <property type="match status" value="1"/>
</dbReference>
<dbReference type="PROSITE" id="PS00548">
    <property type="entry name" value="RIBOSOMAL_S3"/>
    <property type="match status" value="1"/>
</dbReference>
<protein>
    <recommendedName>
        <fullName evidence="2">Small ribosomal subunit protein uS3c</fullName>
    </recommendedName>
    <alternativeName>
        <fullName>30S ribosomal protein S3, chloroplastic</fullName>
    </alternativeName>
</protein>
<comment type="subunit">
    <text evidence="1">Part of the 30S ribosomal subunit.</text>
</comment>
<comment type="subcellular location">
    <subcellularLocation>
        <location>Plastid</location>
        <location>Chloroplast</location>
    </subcellularLocation>
</comment>
<comment type="similarity">
    <text evidence="2">Belongs to the universal ribosomal protein uS3 family.</text>
</comment>
<feature type="chain" id="PRO_0000293957" description="Small ribosomal subunit protein uS3c">
    <location>
        <begin position="1"/>
        <end position="700"/>
    </location>
</feature>
<feature type="region of interest" description="Insert">
    <location>
        <begin position="88"/>
        <end position="196"/>
    </location>
</feature>
<feature type="region of interest" description="Insert">
    <location>
        <begin position="282"/>
        <end position="587"/>
    </location>
</feature>
<geneLocation type="chloroplast"/>
<evidence type="ECO:0000250" key="1"/>
<evidence type="ECO:0000305" key="2"/>